<name>RIHA_ECO7I</name>
<feature type="chain" id="PRO_1000145791" description="Pyrimidine-specific ribonucleoside hydrolase RihA">
    <location>
        <begin position="1"/>
        <end position="311"/>
    </location>
</feature>
<feature type="active site" evidence="1">
    <location>
        <position position="240"/>
    </location>
</feature>
<keyword id="KW-0326">Glycosidase</keyword>
<keyword id="KW-0378">Hydrolase</keyword>
<organism>
    <name type="scientific">Escherichia coli O7:K1 (strain IAI39 / ExPEC)</name>
    <dbReference type="NCBI Taxonomy" id="585057"/>
    <lineage>
        <taxon>Bacteria</taxon>
        <taxon>Pseudomonadati</taxon>
        <taxon>Pseudomonadota</taxon>
        <taxon>Gammaproteobacteria</taxon>
        <taxon>Enterobacterales</taxon>
        <taxon>Enterobacteriaceae</taxon>
        <taxon>Escherichia</taxon>
    </lineage>
</organism>
<sequence>MALPILLDCDPGHDDAIAIVLALASPELDVKAITSSAGNQTPEKTLRNVLRMLTLLNRTDIPVASGAVKPLMRDLIIADNVHGESGLDGPALPEPTFAPQNCTAVELMAKTLRESAEPVTIVSTGPQTNVALLLNSHPELHSKIARIVIMGGAMGLGNWTPAAEFNIYVDPEAAEIVFQSGIPVVMAGLDVTHKAQIHVEDTERFRAIGNPVSTIVAELLDFFLEYHKDEKWGFVGAPLHDPCTIAWLLKPELFTTVERWVGVETQGKYTQGMTVVDYYYLTGNKPNATVMVDVDRQGFVDLLAERLKFYA</sequence>
<evidence type="ECO:0000255" key="1">
    <source>
        <dbReference type="HAMAP-Rule" id="MF_01431"/>
    </source>
</evidence>
<gene>
    <name evidence="1" type="primary">rihA</name>
    <name type="ordered locus">ECIAI39_0619</name>
</gene>
<comment type="function">
    <text evidence="1">Hydrolyzes with equal efficiency cytidine or uridine to ribose and cytosine or uracil, respectively.</text>
</comment>
<comment type="similarity">
    <text evidence="1">Belongs to the IUNH family. RihA subfamily.</text>
</comment>
<proteinExistence type="inferred from homology"/>
<reference key="1">
    <citation type="journal article" date="2009" name="PLoS Genet.">
        <title>Organised genome dynamics in the Escherichia coli species results in highly diverse adaptive paths.</title>
        <authorList>
            <person name="Touchon M."/>
            <person name="Hoede C."/>
            <person name="Tenaillon O."/>
            <person name="Barbe V."/>
            <person name="Baeriswyl S."/>
            <person name="Bidet P."/>
            <person name="Bingen E."/>
            <person name="Bonacorsi S."/>
            <person name="Bouchier C."/>
            <person name="Bouvet O."/>
            <person name="Calteau A."/>
            <person name="Chiapello H."/>
            <person name="Clermont O."/>
            <person name="Cruveiller S."/>
            <person name="Danchin A."/>
            <person name="Diard M."/>
            <person name="Dossat C."/>
            <person name="Karoui M.E."/>
            <person name="Frapy E."/>
            <person name="Garry L."/>
            <person name="Ghigo J.M."/>
            <person name="Gilles A.M."/>
            <person name="Johnson J."/>
            <person name="Le Bouguenec C."/>
            <person name="Lescat M."/>
            <person name="Mangenot S."/>
            <person name="Martinez-Jehanne V."/>
            <person name="Matic I."/>
            <person name="Nassif X."/>
            <person name="Oztas S."/>
            <person name="Petit M.A."/>
            <person name="Pichon C."/>
            <person name="Rouy Z."/>
            <person name="Ruf C.S."/>
            <person name="Schneider D."/>
            <person name="Tourret J."/>
            <person name="Vacherie B."/>
            <person name="Vallenet D."/>
            <person name="Medigue C."/>
            <person name="Rocha E.P.C."/>
            <person name="Denamur E."/>
        </authorList>
    </citation>
    <scope>NUCLEOTIDE SEQUENCE [LARGE SCALE GENOMIC DNA]</scope>
    <source>
        <strain>IAI39 / ExPEC</strain>
    </source>
</reference>
<dbReference type="EC" id="3.2.-.-" evidence="1"/>
<dbReference type="EMBL" id="CU928164">
    <property type="protein sequence ID" value="CAR16756.1"/>
    <property type="molecule type" value="Genomic_DNA"/>
</dbReference>
<dbReference type="RefSeq" id="WP_001207533.1">
    <property type="nucleotide sequence ID" value="NC_011750.1"/>
</dbReference>
<dbReference type="RefSeq" id="YP_002406645.1">
    <property type="nucleotide sequence ID" value="NC_011750.1"/>
</dbReference>
<dbReference type="SMR" id="B7NM03"/>
<dbReference type="STRING" id="585057.ECIAI39_0619"/>
<dbReference type="KEGG" id="ect:ECIAI39_0619"/>
<dbReference type="PATRIC" id="fig|585057.6.peg.658"/>
<dbReference type="HOGENOM" id="CLU_036838_2_0_6"/>
<dbReference type="Proteomes" id="UP000000749">
    <property type="component" value="Chromosome"/>
</dbReference>
<dbReference type="GO" id="GO:0005829">
    <property type="term" value="C:cytosol"/>
    <property type="evidence" value="ECO:0007669"/>
    <property type="project" value="TreeGrafter"/>
</dbReference>
<dbReference type="GO" id="GO:0008477">
    <property type="term" value="F:purine nucleosidase activity"/>
    <property type="evidence" value="ECO:0007669"/>
    <property type="project" value="TreeGrafter"/>
</dbReference>
<dbReference type="GO" id="GO:0045437">
    <property type="term" value="F:uridine nucleosidase activity"/>
    <property type="evidence" value="ECO:0007669"/>
    <property type="project" value="InterPro"/>
</dbReference>
<dbReference type="GO" id="GO:0015949">
    <property type="term" value="P:nucleobase-containing small molecule interconversion"/>
    <property type="evidence" value="ECO:0007669"/>
    <property type="project" value="InterPro"/>
</dbReference>
<dbReference type="GO" id="GO:0006152">
    <property type="term" value="P:purine nucleoside catabolic process"/>
    <property type="evidence" value="ECO:0007669"/>
    <property type="project" value="TreeGrafter"/>
</dbReference>
<dbReference type="GO" id="GO:0006206">
    <property type="term" value="P:pyrimidine nucleobase metabolic process"/>
    <property type="evidence" value="ECO:0007669"/>
    <property type="project" value="UniProtKB-UniRule"/>
</dbReference>
<dbReference type="CDD" id="cd02651">
    <property type="entry name" value="nuc_hydro_IU_UC_XIUA"/>
    <property type="match status" value="1"/>
</dbReference>
<dbReference type="FunFam" id="3.90.245.10:FF:000001">
    <property type="entry name" value="Pyrimidine-specific ribonucleoside hydrolase RihA"/>
    <property type="match status" value="1"/>
</dbReference>
<dbReference type="Gene3D" id="3.90.245.10">
    <property type="entry name" value="Ribonucleoside hydrolase-like"/>
    <property type="match status" value="1"/>
</dbReference>
<dbReference type="HAMAP" id="MF_01431">
    <property type="entry name" value="Pyrim_hydro_RihA"/>
    <property type="match status" value="1"/>
</dbReference>
<dbReference type="InterPro" id="IPR015910">
    <property type="entry name" value="I/U_nuclsd_hydro_CS"/>
</dbReference>
<dbReference type="InterPro" id="IPR001910">
    <property type="entry name" value="Inosine/uridine_hydrolase_dom"/>
</dbReference>
<dbReference type="InterPro" id="IPR023186">
    <property type="entry name" value="IUNH"/>
</dbReference>
<dbReference type="InterPro" id="IPR022975">
    <property type="entry name" value="Pyrim_hydro_RihA"/>
</dbReference>
<dbReference type="InterPro" id="IPR036452">
    <property type="entry name" value="Ribo_hydro-like"/>
</dbReference>
<dbReference type="NCBIfam" id="NF007761">
    <property type="entry name" value="PRK10443.1"/>
    <property type="match status" value="1"/>
</dbReference>
<dbReference type="PANTHER" id="PTHR12304">
    <property type="entry name" value="INOSINE-URIDINE PREFERRING NUCLEOSIDE HYDROLASE"/>
    <property type="match status" value="1"/>
</dbReference>
<dbReference type="PANTHER" id="PTHR12304:SF4">
    <property type="entry name" value="URIDINE NUCLEOSIDASE"/>
    <property type="match status" value="1"/>
</dbReference>
<dbReference type="Pfam" id="PF01156">
    <property type="entry name" value="IU_nuc_hydro"/>
    <property type="match status" value="1"/>
</dbReference>
<dbReference type="SUPFAM" id="SSF53590">
    <property type="entry name" value="Nucleoside hydrolase"/>
    <property type="match status" value="1"/>
</dbReference>
<dbReference type="PROSITE" id="PS01247">
    <property type="entry name" value="IUNH"/>
    <property type="match status" value="1"/>
</dbReference>
<protein>
    <recommendedName>
        <fullName evidence="1">Pyrimidine-specific ribonucleoside hydrolase RihA</fullName>
        <ecNumber evidence="1">3.2.-.-</ecNumber>
    </recommendedName>
    <alternativeName>
        <fullName evidence="1">Cytidine/uridine-specific hydrolase</fullName>
    </alternativeName>
</protein>
<accession>B7NM03</accession>